<organism>
    <name type="scientific">Saccharolobus solfataricus (strain ATCC 35092 / DSM 1617 / JCM 11322 / P2)</name>
    <name type="common">Sulfolobus solfataricus</name>
    <dbReference type="NCBI Taxonomy" id="273057"/>
    <lineage>
        <taxon>Archaea</taxon>
        <taxon>Thermoproteota</taxon>
        <taxon>Thermoprotei</taxon>
        <taxon>Sulfolobales</taxon>
        <taxon>Sulfolobaceae</taxon>
        <taxon>Saccharolobus</taxon>
    </lineage>
</organism>
<gene>
    <name type="primary">csa1</name>
    <name type="ordered locus">SSO1391</name>
</gene>
<name>CSA1_SACS2</name>
<accession>Q97YD4</accession>
<dbReference type="EMBL" id="AE006641">
    <property type="protein sequence ID" value="AAK41627.1"/>
    <property type="molecule type" value="Genomic_DNA"/>
</dbReference>
<dbReference type="PIR" id="D90296">
    <property type="entry name" value="D90296"/>
</dbReference>
<dbReference type="STRING" id="273057.SSO1391"/>
<dbReference type="PaxDb" id="273057-SSO1391"/>
<dbReference type="EnsemblBacteria" id="AAK41627">
    <property type="protein sequence ID" value="AAK41627"/>
    <property type="gene ID" value="SSO1391"/>
</dbReference>
<dbReference type="KEGG" id="sso:SSO1391"/>
<dbReference type="PATRIC" id="fig|273057.12.peg.1407"/>
<dbReference type="eggNOG" id="arCOG04195">
    <property type="taxonomic scope" value="Archaea"/>
</dbReference>
<dbReference type="HOGENOM" id="CLU_905009_0_0_2"/>
<dbReference type="InParanoid" id="Q97YD4"/>
<dbReference type="PhylomeDB" id="Q97YD4"/>
<dbReference type="Proteomes" id="UP000001974">
    <property type="component" value="Chromosome"/>
</dbReference>
<dbReference type="GO" id="GO:0051539">
    <property type="term" value="F:4 iron, 4 sulfur cluster binding"/>
    <property type="evidence" value="ECO:0007669"/>
    <property type="project" value="UniProtKB-KW"/>
</dbReference>
<dbReference type="GO" id="GO:0046872">
    <property type="term" value="F:metal ion binding"/>
    <property type="evidence" value="ECO:0007669"/>
    <property type="project" value="UniProtKB-KW"/>
</dbReference>
<dbReference type="GO" id="GO:0008310">
    <property type="term" value="F:single-stranded DNA 3'-5' DNA exonuclease activity"/>
    <property type="evidence" value="ECO:0000314"/>
    <property type="project" value="UniProtKB"/>
</dbReference>
<dbReference type="GO" id="GO:0045145">
    <property type="term" value="F:single-stranded DNA 5'-3' DNA exonuclease activity"/>
    <property type="evidence" value="ECO:0000314"/>
    <property type="project" value="UniProtKB"/>
</dbReference>
<dbReference type="GO" id="GO:0000014">
    <property type="term" value="F:single-stranded DNA endodeoxyribonuclease activity"/>
    <property type="evidence" value="ECO:0000314"/>
    <property type="project" value="UniProtKB"/>
</dbReference>
<dbReference type="GO" id="GO:0051607">
    <property type="term" value="P:defense response to virus"/>
    <property type="evidence" value="ECO:0007669"/>
    <property type="project" value="UniProtKB-KW"/>
</dbReference>
<dbReference type="Gene3D" id="3.90.320.10">
    <property type="match status" value="1"/>
</dbReference>
<dbReference type="InterPro" id="IPR009260">
    <property type="entry name" value="CRISPR-ass_Csa1"/>
</dbReference>
<dbReference type="InterPro" id="IPR011604">
    <property type="entry name" value="PDDEXK-like_dom_sf"/>
</dbReference>
<dbReference type="NCBIfam" id="TIGR01896">
    <property type="entry name" value="cas_AF1879"/>
    <property type="match status" value="1"/>
</dbReference>
<dbReference type="Pfam" id="PF06023">
    <property type="entry name" value="Csa1"/>
    <property type="match status" value="1"/>
</dbReference>
<dbReference type="PIRSF" id="PIRSF009226">
    <property type="entry name" value="UCP009226"/>
    <property type="match status" value="1"/>
</dbReference>
<feature type="chain" id="PRO_0000422231" description="CRISPR-associated exonuclease Csa1">
    <location>
        <begin position="1"/>
        <end position="291"/>
    </location>
</feature>
<feature type="binding site" evidence="2">
    <location>
        <position position="52"/>
    </location>
    <ligand>
        <name>[4Fe-4S] cluster</name>
        <dbReference type="ChEBI" id="CHEBI:49883"/>
    </ligand>
</feature>
<feature type="binding site" evidence="2">
    <location>
        <position position="279"/>
    </location>
    <ligand>
        <name>[4Fe-4S] cluster</name>
        <dbReference type="ChEBI" id="CHEBI:49883"/>
    </ligand>
</feature>
<feature type="binding site" evidence="2">
    <location>
        <position position="283"/>
    </location>
    <ligand>
        <name>[4Fe-4S] cluster</name>
        <dbReference type="ChEBI" id="CHEBI:49883"/>
    </ligand>
</feature>
<feature type="binding site" evidence="2">
    <location>
        <position position="289"/>
    </location>
    <ligand>
        <name>[4Fe-4S] cluster</name>
        <dbReference type="ChEBI" id="CHEBI:49883"/>
    </ligand>
</feature>
<feature type="mutagenesis site" description="Nearly wild-type protein." evidence="4">
    <original>C</original>
    <variation>A</variation>
    <location>
        <position position="52"/>
    </location>
</feature>
<feature type="mutagenesis site" description="No effect." evidence="4">
    <original>Y</original>
    <variation>A</variation>
    <location>
        <position position="59"/>
    </location>
</feature>
<feature type="mutagenesis site" description="No exonuclease, endonuclease, or DNA unwinding activity." evidence="4">
    <original>H</original>
    <variation>A</variation>
    <location>
        <position position="80"/>
    </location>
</feature>
<feature type="mutagenesis site" description="No exonuclease, endonuclease, or DNA unwinding activity." evidence="4">
    <original>D</original>
    <variation>A</variation>
    <location>
        <position position="184"/>
    </location>
</feature>
<feature type="mutagenesis site" description="No exonuclease, endonuclease, or DNA unwinding activity." evidence="3 4">
    <original>E</original>
    <variation>A</variation>
    <location>
        <position position="195"/>
    </location>
</feature>
<feature type="mutagenesis site" description="No exonuclease, endonuclease, or DNA unwinding activity." evidence="4">
    <original>K</original>
    <variation>A</variation>
    <location>
        <position position="197"/>
    </location>
</feature>
<feature type="mutagenesis site" description="No effect." evidence="4">
    <original>Y</original>
    <variation>A</variation>
    <location>
        <position position="201"/>
    </location>
</feature>
<feature type="mutagenesis site" description="No exonuclease, endonuclease, or DNA unwinding activity." evidence="4">
    <original>Y</original>
    <variation>A</variation>
    <location>
        <position position="212"/>
    </location>
</feature>
<feature type="mutagenesis site" description="Reduced exonuclease and DNA unwinding, no endonuclease activity." evidence="4">
    <original>E</original>
    <variation>A</variation>
    <location>
        <position position="217"/>
    </location>
</feature>
<feature type="mutagenesis site" description="No effect." evidence="4">
    <original>C</original>
    <variation>A</variation>
    <location>
        <position position="230"/>
    </location>
</feature>
<feature type="mutagenesis site" description="No effect." evidence="4">
    <original>C</original>
    <variation>A</variation>
    <location>
        <position position="243"/>
    </location>
</feature>
<feature type="mutagenesis site" description="Wild-type exonuclease, reduced DNA unwinding, no endonuclease activity." evidence="4">
    <original>R</original>
    <variation>A</variation>
    <location>
        <position position="260"/>
    </location>
</feature>
<feature type="mutagenesis site" description="Wild-type exonuclease and DNA unwinding, reduced endonuclease activity." evidence="4">
    <original>C</original>
    <variation>A</variation>
    <location>
        <position position="283"/>
    </location>
</feature>
<feature type="mutagenesis site" description="Wild-type exonuclease and DNA unwinding, reduced endonuclease activity." evidence="4">
    <original>C</original>
    <variation>A</variation>
    <location>
        <position position="289"/>
    </location>
</feature>
<protein>
    <recommendedName>
        <fullName>CRISPR-associated exonuclease Csa1</fullName>
    </recommendedName>
</protein>
<evidence type="ECO:0000250" key="1"/>
<evidence type="ECO:0000250" key="2">
    <source>
        <dbReference type="UniProtKB" id="Q97TX9"/>
    </source>
</evidence>
<evidence type="ECO:0000269" key="3">
    <source>
    </source>
</evidence>
<evidence type="ECO:0000269" key="4">
    <source>
    </source>
</evidence>
<evidence type="ECO:0000303" key="5">
    <source>
    </source>
</evidence>
<evidence type="ECO:0000303" key="6">
    <source>
    </source>
</evidence>
<evidence type="ECO:0000303" key="7">
    <source>
    </source>
</evidence>
<evidence type="ECO:0000305" key="8"/>
<keyword id="KW-0004">4Fe-4S</keyword>
<keyword id="KW-0051">Antiviral defense</keyword>
<keyword id="KW-0269">Exonuclease</keyword>
<keyword id="KW-0378">Hydrolase</keyword>
<keyword id="KW-0408">Iron</keyword>
<keyword id="KW-0411">Iron-sulfur</keyword>
<keyword id="KW-0464">Manganese</keyword>
<keyword id="KW-0479">Metal-binding</keyword>
<keyword id="KW-0540">Nuclease</keyword>
<keyword id="KW-1185">Reference proteome</keyword>
<proteinExistence type="evidence at protein level"/>
<comment type="function">
    <text evidence="1 3 4">CRISPR (clustered regularly interspaced short palindromic repeat) is an adaptive immune system that provides protection against mobile genetic elements (viruses, transposable elements and conjugative plasmids). CRISPR clusters contain sequences complementary to antecedent mobile elements and target invading nucleic acids. CRISPR clusters are transcribed and processed into CRISPR RNA (crRNA) (By similarity). A ssDNA exonuclease that has both 5' to 3' and 3' to 5' activity, yielding 5'-OH and 3'-phosphate groups. Has Mn(2+)-dependent endonuclease activity on circular ssDNA. Can unwind dsDNA; unwinding does not require ATP.</text>
</comment>
<comment type="cofactor">
    <cofactor evidence="3 4">
        <name>Mn(2+)</name>
        <dbReference type="ChEBI" id="CHEBI:29035"/>
    </cofactor>
    <cofactor evidence="3 4">
        <name>Co(2+)</name>
        <dbReference type="ChEBI" id="CHEBI:48828"/>
    </cofactor>
    <text evidence="3 4">Mn(2+) required for nuclease activity. Can also utilize Co(2+) and to a lesser extent Mg(2+) or Ni(2+).</text>
</comment>
<comment type="cofactor">
    <cofactor evidence="2 5 6 7">
        <name>[4Fe-4S] cluster</name>
        <dbReference type="ChEBI" id="CHEBI:49883"/>
    </cofactor>
    <text evidence="2 5 6 7">Binds 1 [4Fe-4S] cluster per subunit. Not required for nuclease activity, since mutation of the Cys residues leads to a colorless but active protein.</text>
</comment>
<comment type="biophysicochemical properties">
    <phDependence>
        <text evidence="4">Optimum pH is 7-9.</text>
    </phDependence>
</comment>
<comment type="subunit">
    <text evidence="4">Homodimer.</text>
</comment>
<comment type="similarity">
    <text evidence="8">Belongs to the CRISPR-associated protein Csa1 family.</text>
</comment>
<reference key="1">
    <citation type="journal article" date="2001" name="Proc. Natl. Acad. Sci. U.S.A.">
        <title>The complete genome of the crenarchaeon Sulfolobus solfataricus P2.</title>
        <authorList>
            <person name="She Q."/>
            <person name="Singh R.K."/>
            <person name="Confalonieri F."/>
            <person name="Zivanovic Y."/>
            <person name="Allard G."/>
            <person name="Awayez M.J."/>
            <person name="Chan-Weiher C.C.-Y."/>
            <person name="Clausen I.G."/>
            <person name="Curtis B.A."/>
            <person name="De Moors A."/>
            <person name="Erauso G."/>
            <person name="Fletcher C."/>
            <person name="Gordon P.M.K."/>
            <person name="Heikamp-de Jong I."/>
            <person name="Jeffries A.C."/>
            <person name="Kozera C.J."/>
            <person name="Medina N."/>
            <person name="Peng X."/>
            <person name="Thi-Ngoc H.P."/>
            <person name="Redder P."/>
            <person name="Schenk M.E."/>
            <person name="Theriault C."/>
            <person name="Tolstrup N."/>
            <person name="Charlebois R.L."/>
            <person name="Doolittle W.F."/>
            <person name="Duguet M."/>
            <person name="Gaasterland T."/>
            <person name="Garrett R.A."/>
            <person name="Ragan M.A."/>
            <person name="Sensen C.W."/>
            <person name="Van der Oost J."/>
        </authorList>
    </citation>
    <scope>NUCLEOTIDE SEQUENCE [LARGE SCALE GENOMIC DNA]</scope>
    <source>
        <strain>ATCC 35092 / DSM 1617 / JCM 11322 / P2</strain>
    </source>
</reference>
<reference key="2">
    <citation type="journal article" date="2012" name="PLoS ONE">
        <title>The CRISPR associated protein Cas4 is a 5' to 3' DNA exonuclease with an iron-sulfur cluster.</title>
        <authorList>
            <person name="Zhang J."/>
            <person name="Kasciukovic T."/>
            <person name="White M.F."/>
        </authorList>
    </citation>
    <scope>POSSIBLE COFACTOR</scope>
    <source>
        <strain>ATCC 35092 / DSM 1617 / JCM 11322 / P2</strain>
    </source>
</reference>
<reference key="3">
    <citation type="journal article" date="2013" name="J. Am. Chem. Soc.">
        <title>Toroidal structure and DNA cleavage by the CRISPR-associated [4Fe-4S] cluster containing Cas4 nuclease SSO0001 from Sulfolobus solfataricus.</title>
        <authorList>
            <person name="Lemak S."/>
            <person name="Beloglazova N."/>
            <person name="Nocek B."/>
            <person name="Skarina T."/>
            <person name="Flick R."/>
            <person name="Brown G."/>
            <person name="Popovic A."/>
            <person name="Joachimiak A."/>
            <person name="Savchenko A."/>
            <person name="Yakunin A.F."/>
        </authorList>
    </citation>
    <scope>FUNCTION</scope>
    <scope>COFACTOR</scope>
    <scope>MUTAGENESIS OF GLU-195</scope>
</reference>
<reference key="4">
    <citation type="journal article" date="2014" name="Nucleic Acids Res.">
        <title>The CRISPR-associated Cas4 protein Pcal_0546 from Pyrobaculum calidifontis contains a [2Fe-2S] cluster: crystal structure and nuclease activity.</title>
        <authorList>
            <person name="Lemak S."/>
            <person name="Nocek B."/>
            <person name="Beloglazova N."/>
            <person name="Skarina T."/>
            <person name="Flick R."/>
            <person name="Brown G."/>
            <person name="Joachimiak A."/>
            <person name="Savchenko A."/>
            <person name="Yakunin A.F."/>
        </authorList>
    </citation>
    <scope>FUNCTION</scope>
    <scope>BIOPHYSICOCHEMICAL PROPERTIES</scope>
    <scope>COFACTOR</scope>
    <scope>SUBUNIT</scope>
    <scope>MUTAGENESIS OF CYS-52; TYR-59; HIS-80; ASP-184; GLU-195; LYS-197; TYR-201; TYR-212; GLU-217; CYS-230; CYS-243; ARG-260; CYS-283 AND CYS-289</scope>
</reference>
<sequence>MFFTHSDMLLLSKRIKKLPKNVDEELRGWNWSEPPVYTRSLSQVSISEMVYCSTLRNVYLKVKGFRGEIGRQILQGSLIHTIYAIGIEAIKRFIYSRESIDGSTLRTLMGDEFYSLLKDLREEEGIYAKVLWDHITNIYSAELDRVRSKFTNLTRDSLVSQVVPFYVEFPVDGSLLGLTNLRVDAFIPHLPLIAEMKTGKYRYTHELSLAGYALAIESQYEIPIDFGYLCYVTVTEKEVKNNCKLIPISDSLRSEFLDMRDKAQDIMDKGVDPGIAKDCESDCMFYKVCHP</sequence>